<accession>Q9QSP2</accession>
<keyword id="KW-1043">Host membrane</keyword>
<keyword id="KW-0945">Host-virus interaction</keyword>
<keyword id="KW-0472">Membrane</keyword>
<keyword id="KW-0597">Phosphoprotein</keyword>
<keyword id="KW-1185">Reference proteome</keyword>
<keyword id="KW-1198">Viral budding</keyword>
<keyword id="KW-1187">Viral budding via the host ESCRT complexes</keyword>
<keyword id="KW-0261">Viral envelope protein</keyword>
<keyword id="KW-0468">Viral matrix protein</keyword>
<keyword id="KW-1188">Viral release from host cell</keyword>
<keyword id="KW-0946">Virion</keyword>
<proteinExistence type="inferred from homology"/>
<name>MATRX_ABLVB</name>
<evidence type="ECO:0000250" key="1"/>
<evidence type="ECO:0000255" key="2"/>
<evidence type="ECO:0000305" key="3"/>
<reference key="1">
    <citation type="journal article" date="2002" name="Virus Res.">
        <title>Characterisation of an Australian bat lyssavirus variant isolated from an insectivorous bat.</title>
        <authorList>
            <person name="Gould A.R."/>
            <person name="Kattenbelt J.A."/>
            <person name="Gumley S.G."/>
            <person name="Lunt R.A."/>
        </authorList>
    </citation>
    <scope>NUCLEOTIDE SEQUENCE [GENOMIC RNA]</scope>
</reference>
<organismHost>
    <name type="scientific">Homo sapiens</name>
    <name type="common">Human</name>
    <dbReference type="NCBI Taxonomy" id="9606"/>
</organismHost>
<organismHost>
    <name type="scientific">Pteropus alecto</name>
    <name type="common">Black flying fox</name>
    <dbReference type="NCBI Taxonomy" id="9402"/>
</organismHost>
<organismHost>
    <name type="scientific">Pteropus conspicillatus</name>
    <name type="common">Spectacled flying fox</name>
    <dbReference type="NCBI Taxonomy" id="328804"/>
</organismHost>
<organismHost>
    <name type="scientific">Pteropus poliocephalus</name>
    <name type="common">Grey-headed flying fox</name>
    <dbReference type="NCBI Taxonomy" id="9403"/>
</organismHost>
<organismHost>
    <name type="scientific">Pteropus scapulatus</name>
    <name type="common">Little red flying fox</name>
    <dbReference type="NCBI Taxonomy" id="94117"/>
</organismHost>
<organismHost>
    <name type="scientific">Saccolaimus</name>
    <dbReference type="NCBI Taxonomy" id="446909"/>
</organismHost>
<feature type="chain" id="PRO_0000295567" description="Matrix protein">
    <location>
        <begin position="1"/>
        <end position="212"/>
    </location>
</feature>
<feature type="region of interest" description="Essential for glycoprotein binding" evidence="1">
    <location>
        <begin position="125"/>
        <end position="161"/>
    </location>
</feature>
<feature type="short sequence motif" description="PPXY motif" evidence="2">
    <location>
        <begin position="45"/>
        <end position="48"/>
    </location>
</feature>
<gene>
    <name type="primary">M</name>
</gene>
<organism>
    <name type="scientific">Australian bat lyssavirus (isolate Bat/AUS/1996)</name>
    <name type="common">ABLV</name>
    <dbReference type="NCBI Taxonomy" id="446561"/>
    <lineage>
        <taxon>Viruses</taxon>
        <taxon>Riboviria</taxon>
        <taxon>Orthornavirae</taxon>
        <taxon>Negarnaviricota</taxon>
        <taxon>Haploviricotina</taxon>
        <taxon>Monjiviricetes</taxon>
        <taxon>Mononegavirales</taxon>
        <taxon>Rhabdoviridae</taxon>
        <taxon>Alpharhabdovirinae</taxon>
        <taxon>Lyssavirus</taxon>
        <taxon>Lyssavirus australis</taxon>
    </lineage>
</organism>
<protein>
    <recommendedName>
        <fullName>Matrix protein</fullName>
    </recommendedName>
    <alternativeName>
        <fullName>Phosphoprotein M2</fullName>
    </alternativeName>
</protein>
<dbReference type="EMBL" id="AF081020">
    <property type="protein sequence ID" value="AAD47898.1"/>
    <property type="molecule type" value="Genomic_RNA"/>
</dbReference>
<dbReference type="RefSeq" id="NP_478341.1">
    <property type="nucleotide sequence ID" value="NC_003243.1"/>
</dbReference>
<dbReference type="SMR" id="Q9QSP2"/>
<dbReference type="IntAct" id="Q9QSP2">
    <property type="interactions" value="6"/>
</dbReference>
<dbReference type="GeneID" id="926732"/>
<dbReference type="KEGG" id="vg:926732"/>
<dbReference type="Proteomes" id="UP000006934">
    <property type="component" value="Segment"/>
</dbReference>
<dbReference type="GO" id="GO:0033645">
    <property type="term" value="C:host cell endomembrane system"/>
    <property type="evidence" value="ECO:0007669"/>
    <property type="project" value="UniProtKB-SubCell"/>
</dbReference>
<dbReference type="GO" id="GO:0016020">
    <property type="term" value="C:membrane"/>
    <property type="evidence" value="ECO:0007669"/>
    <property type="project" value="UniProtKB-KW"/>
</dbReference>
<dbReference type="GO" id="GO:0019031">
    <property type="term" value="C:viral envelope"/>
    <property type="evidence" value="ECO:0007669"/>
    <property type="project" value="UniProtKB-KW"/>
</dbReference>
<dbReference type="GO" id="GO:0055036">
    <property type="term" value="C:virion membrane"/>
    <property type="evidence" value="ECO:0007669"/>
    <property type="project" value="UniProtKB-SubCell"/>
</dbReference>
<dbReference type="GO" id="GO:0039660">
    <property type="term" value="F:structural constituent of virion"/>
    <property type="evidence" value="ECO:0007669"/>
    <property type="project" value="UniProtKB-KW"/>
</dbReference>
<dbReference type="GO" id="GO:0039702">
    <property type="term" value="P:viral budding via host ESCRT complex"/>
    <property type="evidence" value="ECO:0007669"/>
    <property type="project" value="UniProtKB-KW"/>
</dbReference>
<dbReference type="Gene3D" id="3.10.460.20">
    <property type="entry name" value="Rhabdovirus matrix protein M2"/>
    <property type="match status" value="1"/>
</dbReference>
<dbReference type="InterPro" id="IPR006870">
    <property type="entry name" value="Rhabdo_M"/>
</dbReference>
<dbReference type="InterPro" id="IPR038617">
    <property type="entry name" value="Rhabdovirus_M_sf"/>
</dbReference>
<dbReference type="Pfam" id="PF04785">
    <property type="entry name" value="Rhabdo_M2"/>
    <property type="match status" value="1"/>
</dbReference>
<comment type="function">
    <text evidence="1">Plays a major role in assembly and budding of virion. Completely covers the ribonucleoprotein coil and keep it in condensed bullet-shaped form. Inhibits viral transcription and stimulates replication. Plays a major role in early induction of TRAIL-mediated apoptosis in infected neurons (By similarity).</text>
</comment>
<comment type="subunit">
    <text evidence="1">Homomultimer. Interacts with nucleoprotein and with the cytoplasmic domain of glycoprotein (By similarity).</text>
</comment>
<comment type="subcellular location">
    <subcellularLocation>
        <location>Virion membrane</location>
        <topology>Peripheral membrane protein</topology>
    </subcellularLocation>
    <subcellularLocation>
        <location evidence="1">Host endomembrane system</location>
        <topology evidence="1">Peripheral membrane protein</topology>
    </subcellularLocation>
</comment>
<comment type="domain">
    <text evidence="3">Late-budding domains (L domains) are short sequence motifs essential for viral particle budding. They recruit proteins of the host ESCRT machinery (Endosomal Sorting Complex Required for Transport) or ESCRT-associated proteins. Matrix protein contains one L domain: a PPXY motif which potentially interacts with the WW domain 3 of NEDD4 E3 ubiquitin ligase (Potential).</text>
</comment>
<comment type="miscellaneous">
    <text evidence="1">Most abundant protein in the virion.</text>
</comment>
<comment type="similarity">
    <text evidence="3">Belongs to the lyssavirus matrix protein family.</text>
</comment>
<comment type="caution">
    <text evidence="3">It is uncertain whether Met-1 or Met-11 is the initiator.</text>
</comment>
<sequence length="212" mass="24504">MRKTVNTTDKMNFLRKIVRNCKDEDDQKPPLASTLPNDDDLWLPPPEYVPLTEITGKKNMRNLCINGEVKVCSPNGYSFRILRHILESLDEIYSGNHRMIGLVKVVMDLTLSGAPCPEGMNWVYKLRRTLIFQWAESRGPLDGEELEYSQEITWDDDSEFVGLQIRVSARQCHIQGRIWCINMNSRACQLWSDMSLKTQQSEDHKNSSLLLE</sequence>